<proteinExistence type="inferred from homology"/>
<protein>
    <recommendedName>
        <fullName evidence="2">Beta-(1--&gt;2)glucan export ATP-binding/permease protein NdvA</fullName>
        <ecNumber evidence="2">7.5.2.3</ecNumber>
    </recommendedName>
</protein>
<feature type="chain" id="PRO_0000290249" description="Beta-(1--&gt;2)glucan export ATP-binding/permease protein NdvA">
    <location>
        <begin position="1"/>
        <end position="609"/>
    </location>
</feature>
<feature type="transmembrane region" description="Helical" evidence="2">
    <location>
        <begin position="22"/>
        <end position="42"/>
    </location>
</feature>
<feature type="transmembrane region" description="Helical" evidence="2">
    <location>
        <begin position="68"/>
        <end position="88"/>
    </location>
</feature>
<feature type="transmembrane region" description="Helical" evidence="2">
    <location>
        <begin position="146"/>
        <end position="166"/>
    </location>
</feature>
<feature type="transmembrane region" description="Helical" evidence="2">
    <location>
        <begin position="167"/>
        <end position="187"/>
    </location>
</feature>
<feature type="transmembrane region" description="Helical" evidence="2">
    <location>
        <begin position="248"/>
        <end position="268"/>
    </location>
</feature>
<feature type="transmembrane region" description="Helical" evidence="2">
    <location>
        <begin position="285"/>
        <end position="305"/>
    </location>
</feature>
<feature type="domain" description="ABC transmembrane type-1" evidence="2">
    <location>
        <begin position="21"/>
        <end position="311"/>
    </location>
</feature>
<feature type="domain" description="ABC transporter" evidence="2">
    <location>
        <begin position="345"/>
        <end position="579"/>
    </location>
</feature>
<feature type="binding site" evidence="2">
    <location>
        <begin position="378"/>
        <end position="385"/>
    </location>
    <ligand>
        <name>ATP</name>
        <dbReference type="ChEBI" id="CHEBI:30616"/>
    </ligand>
</feature>
<evidence type="ECO:0000250" key="1"/>
<evidence type="ECO:0000255" key="2">
    <source>
        <dbReference type="HAMAP-Rule" id="MF_01728"/>
    </source>
</evidence>
<evidence type="ECO:0000305" key="3"/>
<sequence length="609" mass="66644">MSMVRLYTRVLELLGAEARLGWILAGANLLLAGAQFAEPVLFGRIIDVLSGNPASGLFGMASTSPWPLLAVWAAFGLFTILCGVTVALQADRLSHRQRQAVLTGYFEHIMQLPLAYHAGTHSGRLMKVMLQGTDALWRLWLGFFREHFAAMMSLVVLLPLSLYINWRLAILLFALCIVFTMLTTLVVRRTFDMQNEVEAHFSDLSARASDALGNVALVQSFVRVDAEVQGLRFVVDKLLSAQMPVLSWWAVVTVMTRASTTITILAIFTAGIALNQRGMTSIGEIVMFVSFATMLIQRLEQVVSFINSVFMEAPRLKEFFDVLDAVPAVRDRPDAVDPGRLQGRVEFNDVSFSYDSKRPAVANLSFVASPGETIALVGPTGAGKSTAVALLHRAFDPQSGIIRIDGMDIRDLTLSGLRRNIGVVFQEPLLFNRSIAENLRVGKPDATDEEMRLAAGRAQALDFIERGEKKFDTHAGERGRMLSGGERQRLSIARALLKDPPILILDEATSALDAVTEAKVNAALDEVMKGRTTFVIAHRLSTIRNAARILVFADGRVIESGTFGELLANGGHFAQLAKAQFMTQESTQADLSSSRTNPAVEIRPLSLGN</sequence>
<dbReference type="EC" id="7.5.2.3" evidence="2"/>
<dbReference type="EMBL" id="CP000115">
    <property type="protein sequence ID" value="ABA05934.1"/>
    <property type="status" value="ALT_INIT"/>
    <property type="molecule type" value="Genomic_DNA"/>
</dbReference>
<dbReference type="RefSeq" id="WP_041345132.1">
    <property type="nucleotide sequence ID" value="NC_007406.1"/>
</dbReference>
<dbReference type="SMR" id="Q3SP57"/>
<dbReference type="STRING" id="323098.Nwi_2681"/>
<dbReference type="KEGG" id="nwi:Nwi_2681"/>
<dbReference type="eggNOG" id="COG1132">
    <property type="taxonomic scope" value="Bacteria"/>
</dbReference>
<dbReference type="HOGENOM" id="CLU_000604_84_3_5"/>
<dbReference type="OrthoDB" id="9804259at2"/>
<dbReference type="Proteomes" id="UP000002531">
    <property type="component" value="Chromosome"/>
</dbReference>
<dbReference type="GO" id="GO:0005886">
    <property type="term" value="C:plasma membrane"/>
    <property type="evidence" value="ECO:0007669"/>
    <property type="project" value="UniProtKB-SubCell"/>
</dbReference>
<dbReference type="GO" id="GO:0015441">
    <property type="term" value="F:ABC-type beta-glucan transporter activity"/>
    <property type="evidence" value="ECO:0007669"/>
    <property type="project" value="UniProtKB-EC"/>
</dbReference>
<dbReference type="GO" id="GO:0015421">
    <property type="term" value="F:ABC-type oligopeptide transporter activity"/>
    <property type="evidence" value="ECO:0007669"/>
    <property type="project" value="TreeGrafter"/>
</dbReference>
<dbReference type="GO" id="GO:0005524">
    <property type="term" value="F:ATP binding"/>
    <property type="evidence" value="ECO:0007669"/>
    <property type="project" value="UniProtKB-KW"/>
</dbReference>
<dbReference type="GO" id="GO:0016887">
    <property type="term" value="F:ATP hydrolysis activity"/>
    <property type="evidence" value="ECO:0007669"/>
    <property type="project" value="InterPro"/>
</dbReference>
<dbReference type="CDD" id="cd18562">
    <property type="entry name" value="ABC_6TM_NdvA_beta-glucan_exporter_like"/>
    <property type="match status" value="1"/>
</dbReference>
<dbReference type="FunFam" id="3.40.50.300:FF:000221">
    <property type="entry name" value="Multidrug ABC transporter ATP-binding protein"/>
    <property type="match status" value="1"/>
</dbReference>
<dbReference type="Gene3D" id="1.20.1560.10">
    <property type="entry name" value="ABC transporter type 1, transmembrane domain"/>
    <property type="match status" value="1"/>
</dbReference>
<dbReference type="Gene3D" id="3.40.50.300">
    <property type="entry name" value="P-loop containing nucleotide triphosphate hydrolases"/>
    <property type="match status" value="1"/>
</dbReference>
<dbReference type="InterPro" id="IPR003593">
    <property type="entry name" value="AAA+_ATPase"/>
</dbReference>
<dbReference type="InterPro" id="IPR011527">
    <property type="entry name" value="ABC1_TM_dom"/>
</dbReference>
<dbReference type="InterPro" id="IPR036640">
    <property type="entry name" value="ABC1_TM_sf"/>
</dbReference>
<dbReference type="InterPro" id="IPR003439">
    <property type="entry name" value="ABC_transporter-like_ATP-bd"/>
</dbReference>
<dbReference type="InterPro" id="IPR017871">
    <property type="entry name" value="ABC_transporter-like_CS"/>
</dbReference>
<dbReference type="InterPro" id="IPR005896">
    <property type="entry name" value="NdvA"/>
</dbReference>
<dbReference type="InterPro" id="IPR027417">
    <property type="entry name" value="P-loop_NTPase"/>
</dbReference>
<dbReference type="InterPro" id="IPR039421">
    <property type="entry name" value="Type_1_exporter"/>
</dbReference>
<dbReference type="NCBIfam" id="TIGR01192">
    <property type="entry name" value="chvA"/>
    <property type="match status" value="1"/>
</dbReference>
<dbReference type="NCBIfam" id="NF010178">
    <property type="entry name" value="PRK13657.1"/>
    <property type="match status" value="1"/>
</dbReference>
<dbReference type="PANTHER" id="PTHR43394:SF1">
    <property type="entry name" value="ATP-BINDING CASSETTE SUB-FAMILY B MEMBER 10, MITOCHONDRIAL"/>
    <property type="match status" value="1"/>
</dbReference>
<dbReference type="PANTHER" id="PTHR43394">
    <property type="entry name" value="ATP-DEPENDENT PERMEASE MDL1, MITOCHONDRIAL"/>
    <property type="match status" value="1"/>
</dbReference>
<dbReference type="Pfam" id="PF00664">
    <property type="entry name" value="ABC_membrane"/>
    <property type="match status" value="1"/>
</dbReference>
<dbReference type="Pfam" id="PF00005">
    <property type="entry name" value="ABC_tran"/>
    <property type="match status" value="1"/>
</dbReference>
<dbReference type="SMART" id="SM00382">
    <property type="entry name" value="AAA"/>
    <property type="match status" value="1"/>
</dbReference>
<dbReference type="SUPFAM" id="SSF90123">
    <property type="entry name" value="ABC transporter transmembrane region"/>
    <property type="match status" value="1"/>
</dbReference>
<dbReference type="SUPFAM" id="SSF52540">
    <property type="entry name" value="P-loop containing nucleoside triphosphate hydrolases"/>
    <property type="match status" value="1"/>
</dbReference>
<dbReference type="PROSITE" id="PS50929">
    <property type="entry name" value="ABC_TM1F"/>
    <property type="match status" value="1"/>
</dbReference>
<dbReference type="PROSITE" id="PS00211">
    <property type="entry name" value="ABC_TRANSPORTER_1"/>
    <property type="match status" value="1"/>
</dbReference>
<dbReference type="PROSITE" id="PS50893">
    <property type="entry name" value="ABC_TRANSPORTER_2"/>
    <property type="match status" value="1"/>
</dbReference>
<dbReference type="PROSITE" id="PS51317">
    <property type="entry name" value="NDVA"/>
    <property type="match status" value="1"/>
</dbReference>
<name>NDVA_NITWN</name>
<gene>
    <name evidence="2" type="primary">ndvA</name>
    <name type="ordered locus">Nwi_2681</name>
</gene>
<organism>
    <name type="scientific">Nitrobacter winogradskyi (strain ATCC 25391 / DSM 10237 / CIP 104748 / NCIMB 11846 / Nb-255)</name>
    <dbReference type="NCBI Taxonomy" id="323098"/>
    <lineage>
        <taxon>Bacteria</taxon>
        <taxon>Pseudomonadati</taxon>
        <taxon>Pseudomonadota</taxon>
        <taxon>Alphaproteobacteria</taxon>
        <taxon>Hyphomicrobiales</taxon>
        <taxon>Nitrobacteraceae</taxon>
        <taxon>Nitrobacter</taxon>
    </lineage>
</organism>
<reference key="1">
    <citation type="journal article" date="2006" name="Appl. Environ. Microbiol.">
        <title>Genome sequence of the chemolithoautotrophic nitrite-oxidizing bacterium Nitrobacter winogradskyi Nb-255.</title>
        <authorList>
            <person name="Starkenburg S.R."/>
            <person name="Chain P.S.G."/>
            <person name="Sayavedra-Soto L.A."/>
            <person name="Hauser L."/>
            <person name="Land M.L."/>
            <person name="Larimer F.W."/>
            <person name="Malfatti S.A."/>
            <person name="Klotz M.G."/>
            <person name="Bottomley P.J."/>
            <person name="Arp D.J."/>
            <person name="Hickey W.J."/>
        </authorList>
    </citation>
    <scope>NUCLEOTIDE SEQUENCE [LARGE SCALE GENOMIC DNA]</scope>
    <source>
        <strain>ATCC 25391 / DSM 10237 / CIP 104748 / NCIMB 11846 / Nb-255</strain>
    </source>
</reference>
<keyword id="KW-0067">ATP-binding</keyword>
<keyword id="KW-0997">Cell inner membrane</keyword>
<keyword id="KW-1003">Cell membrane</keyword>
<keyword id="KW-0472">Membrane</keyword>
<keyword id="KW-0547">Nucleotide-binding</keyword>
<keyword id="KW-1185">Reference proteome</keyword>
<keyword id="KW-0762">Sugar transport</keyword>
<keyword id="KW-1278">Translocase</keyword>
<keyword id="KW-0812">Transmembrane</keyword>
<keyword id="KW-1133">Transmembrane helix</keyword>
<keyword id="KW-0813">Transport</keyword>
<comment type="function">
    <text evidence="1">Involved in beta-(1--&gt;2)glucan export. Transmembrane domains (TMD) form a pore in the inner membrane and the ATP-binding domain (NBD) is responsible for energy generation (By similarity).</text>
</comment>
<comment type="catalytic activity">
    <reaction evidence="2">
        <text>[(1-&gt;2)-beta-D-glucosyl](n)(in) + ATP + H2O = [(1-&gt;2)-beta-D-glucosyl](n)(out) + ADP + phosphate + H(+)</text>
        <dbReference type="Rhea" id="RHEA:18453"/>
        <dbReference type="Rhea" id="RHEA-COMP:11881"/>
        <dbReference type="ChEBI" id="CHEBI:15377"/>
        <dbReference type="ChEBI" id="CHEBI:15378"/>
        <dbReference type="ChEBI" id="CHEBI:27517"/>
        <dbReference type="ChEBI" id="CHEBI:30616"/>
        <dbReference type="ChEBI" id="CHEBI:43474"/>
        <dbReference type="ChEBI" id="CHEBI:456216"/>
        <dbReference type="EC" id="7.5.2.3"/>
    </reaction>
</comment>
<comment type="subunit">
    <text evidence="2">Homodimer.</text>
</comment>
<comment type="subcellular location">
    <subcellularLocation>
        <location evidence="2">Cell inner membrane</location>
        <topology evidence="2">Multi-pass membrane protein</topology>
    </subcellularLocation>
</comment>
<comment type="domain">
    <text>In NdvA the ATP-binding domain (NBD) and the transmembrane domain (TMD) are fused.</text>
</comment>
<comment type="similarity">
    <text evidence="2">Belongs to the ABC transporter superfamily. Beta-(1--&gt;2)glucan exporter (TC 3.A.1.108.1) family.</text>
</comment>
<comment type="sequence caution" evidence="3">
    <conflict type="erroneous initiation">
        <sequence resource="EMBL-CDS" id="ABA05934"/>
    </conflict>
</comment>
<accession>Q3SP57</accession>